<dbReference type="EC" id="5.6.2.1" evidence="3"/>
<dbReference type="EMBL" id="EF421830">
    <property type="protein sequence ID" value="ABP57788.1"/>
    <property type="molecule type" value="mRNA"/>
</dbReference>
<dbReference type="RefSeq" id="NP_001106268.1">
    <property type="nucleotide sequence ID" value="NM_001112797.1"/>
</dbReference>
<dbReference type="SMR" id="A9Q1D5"/>
<dbReference type="FunCoup" id="A9Q1D5">
    <property type="interactions" value="1341"/>
</dbReference>
<dbReference type="STRING" id="9598.ENSPTRP00000058183"/>
<dbReference type="PaxDb" id="9598-ENSPTRP00000058183"/>
<dbReference type="GeneID" id="472883"/>
<dbReference type="KEGG" id="ptr:472883"/>
<dbReference type="CTD" id="116447"/>
<dbReference type="eggNOG" id="KOG0981">
    <property type="taxonomic scope" value="Eukaryota"/>
</dbReference>
<dbReference type="InParanoid" id="A9Q1D5"/>
<dbReference type="Proteomes" id="UP000002277">
    <property type="component" value="Unplaced"/>
</dbReference>
<dbReference type="GO" id="GO:0005694">
    <property type="term" value="C:chromosome"/>
    <property type="evidence" value="ECO:0007669"/>
    <property type="project" value="InterPro"/>
</dbReference>
<dbReference type="GO" id="GO:0042645">
    <property type="term" value="C:mitochondrial nucleoid"/>
    <property type="evidence" value="ECO:0000318"/>
    <property type="project" value="GO_Central"/>
</dbReference>
<dbReference type="GO" id="GO:0005634">
    <property type="term" value="C:nucleus"/>
    <property type="evidence" value="ECO:0007669"/>
    <property type="project" value="UniProtKB-ARBA"/>
</dbReference>
<dbReference type="GO" id="GO:0003677">
    <property type="term" value="F:DNA binding"/>
    <property type="evidence" value="ECO:0007669"/>
    <property type="project" value="UniProtKB-KW"/>
</dbReference>
<dbReference type="GO" id="GO:0003917">
    <property type="term" value="F:DNA topoisomerase type I (single strand cut, ATP-independent) activity"/>
    <property type="evidence" value="ECO:0000318"/>
    <property type="project" value="GO_Central"/>
</dbReference>
<dbReference type="GO" id="GO:0006260">
    <property type="term" value="P:DNA replication"/>
    <property type="evidence" value="ECO:0000318"/>
    <property type="project" value="GO_Central"/>
</dbReference>
<dbReference type="GO" id="GO:0006265">
    <property type="term" value="P:DNA topological change"/>
    <property type="evidence" value="ECO:0000318"/>
    <property type="project" value="GO_Central"/>
</dbReference>
<dbReference type="CDD" id="cd00659">
    <property type="entry name" value="Topo_IB_C"/>
    <property type="match status" value="1"/>
</dbReference>
<dbReference type="CDD" id="cd03488">
    <property type="entry name" value="Topoisomer_IB_N_htopoI_like"/>
    <property type="match status" value="1"/>
</dbReference>
<dbReference type="FunFam" id="1.10.132.10:FF:000001">
    <property type="entry name" value="DNA topoisomerase I"/>
    <property type="match status" value="1"/>
</dbReference>
<dbReference type="FunFam" id="2.170.11.10:FF:000002">
    <property type="entry name" value="DNA topoisomerase I"/>
    <property type="match status" value="1"/>
</dbReference>
<dbReference type="FunFam" id="3.90.15.10:FF:000005">
    <property type="entry name" value="DNA topoisomerase I"/>
    <property type="match status" value="1"/>
</dbReference>
<dbReference type="FunFam" id="1.10.10.41:FF:000003">
    <property type="entry name" value="DNA topoisomerase I, mitochondrial"/>
    <property type="match status" value="1"/>
</dbReference>
<dbReference type="Gene3D" id="1.10.132.10">
    <property type="match status" value="1"/>
</dbReference>
<dbReference type="Gene3D" id="2.170.11.10">
    <property type="entry name" value="DNA Topoisomerase I, domain 2"/>
    <property type="match status" value="1"/>
</dbReference>
<dbReference type="Gene3D" id="3.90.15.10">
    <property type="entry name" value="Topoisomerase I, Chain A, domain 3"/>
    <property type="match status" value="1"/>
</dbReference>
<dbReference type="Gene3D" id="1.10.10.41">
    <property type="entry name" value="Yeast DNA topoisomerase - domain 1"/>
    <property type="match status" value="1"/>
</dbReference>
<dbReference type="InterPro" id="IPR011010">
    <property type="entry name" value="DNA_brk_join_enz"/>
</dbReference>
<dbReference type="InterPro" id="IPR013034">
    <property type="entry name" value="DNA_topo_DNA_db_N_dom1"/>
</dbReference>
<dbReference type="InterPro" id="IPR013030">
    <property type="entry name" value="DNA_topo_DNA_db_N_dom2"/>
</dbReference>
<dbReference type="InterPro" id="IPR001631">
    <property type="entry name" value="TopoI"/>
</dbReference>
<dbReference type="InterPro" id="IPR025834">
    <property type="entry name" value="TopoI_C_dom"/>
</dbReference>
<dbReference type="InterPro" id="IPR014711">
    <property type="entry name" value="TopoI_cat_a-hlx-sub_euk"/>
</dbReference>
<dbReference type="InterPro" id="IPR014727">
    <property type="entry name" value="TopoI_cat_a/b-sub_euk"/>
</dbReference>
<dbReference type="InterPro" id="IPR013500">
    <property type="entry name" value="TopoI_cat_euk"/>
</dbReference>
<dbReference type="InterPro" id="IPR008336">
    <property type="entry name" value="TopoI_DNA-bd_euk"/>
</dbReference>
<dbReference type="InterPro" id="IPR036202">
    <property type="entry name" value="TopoI_DNA-bd_euk_N_sf"/>
</dbReference>
<dbReference type="InterPro" id="IPR013499">
    <property type="entry name" value="TopoI_euk"/>
</dbReference>
<dbReference type="InterPro" id="IPR018521">
    <property type="entry name" value="TopoIB_AS"/>
</dbReference>
<dbReference type="InterPro" id="IPR048045">
    <property type="entry name" value="Topoisomer_I_DNA-bd"/>
</dbReference>
<dbReference type="InterPro" id="IPR051062">
    <property type="entry name" value="Topoisomerase_IB"/>
</dbReference>
<dbReference type="PANTHER" id="PTHR10290">
    <property type="entry name" value="DNA TOPOISOMERASE I"/>
    <property type="match status" value="1"/>
</dbReference>
<dbReference type="PANTHER" id="PTHR10290:SF1">
    <property type="entry name" value="DNA TOPOISOMERASE I, MITOCHONDRIAL"/>
    <property type="match status" value="1"/>
</dbReference>
<dbReference type="Pfam" id="PF14370">
    <property type="entry name" value="Topo_C_assoc"/>
    <property type="match status" value="1"/>
</dbReference>
<dbReference type="Pfam" id="PF01028">
    <property type="entry name" value="Topoisom_I"/>
    <property type="match status" value="1"/>
</dbReference>
<dbReference type="Pfam" id="PF02919">
    <property type="entry name" value="Topoisom_I_N"/>
    <property type="match status" value="1"/>
</dbReference>
<dbReference type="PRINTS" id="PR00416">
    <property type="entry name" value="EUTPISMRASEI"/>
</dbReference>
<dbReference type="SMART" id="SM00435">
    <property type="entry name" value="TOPEUc"/>
    <property type="match status" value="1"/>
</dbReference>
<dbReference type="SUPFAM" id="SSF56349">
    <property type="entry name" value="DNA breaking-rejoining enzymes"/>
    <property type="match status" value="1"/>
</dbReference>
<dbReference type="SUPFAM" id="SSF46596">
    <property type="entry name" value="Eukaryotic DNA topoisomerase I, dispensable insert domain"/>
    <property type="match status" value="1"/>
</dbReference>
<dbReference type="SUPFAM" id="SSF56741">
    <property type="entry name" value="Eukaryotic DNA topoisomerase I, N-terminal DNA-binding fragment"/>
    <property type="match status" value="1"/>
</dbReference>
<dbReference type="PROSITE" id="PS00176">
    <property type="entry name" value="TOPO_IB_1"/>
    <property type="match status" value="1"/>
</dbReference>
<dbReference type="PROSITE" id="PS52038">
    <property type="entry name" value="TOPO_IB_2"/>
    <property type="match status" value="1"/>
</dbReference>
<feature type="transit peptide" description="Mitochondrion" evidence="1">
    <location>
        <begin position="1"/>
        <end position="50"/>
    </location>
</feature>
<feature type="chain" id="PRO_0000384394" description="DNA topoisomerase I, mitochondrial">
    <location>
        <begin position="51"/>
        <end position="601"/>
    </location>
</feature>
<feature type="domain" description="Topo IB-type catalytic" evidence="2">
    <location>
        <begin position="268"/>
        <end position="601"/>
    </location>
</feature>
<feature type="region of interest" description="Disordered" evidence="4">
    <location>
        <begin position="22"/>
        <end position="48"/>
    </location>
</feature>
<feature type="region of interest" description="Interaction with DNA" evidence="1">
    <location>
        <begin position="261"/>
        <end position="262"/>
    </location>
</feature>
<feature type="region of interest" description="Interaction with DNA" evidence="1">
    <location>
        <begin position="324"/>
        <end position="329"/>
    </location>
</feature>
<feature type="region of interest" description="Interaction with DNA" evidence="1">
    <location>
        <begin position="421"/>
        <end position="423"/>
    </location>
</feature>
<feature type="active site" description="O-(3'-phospho-DNA)-tyrosine intermediate" evidence="2 3">
    <location>
        <position position="559"/>
    </location>
</feature>
<feature type="site" description="Interaction with DNA" evidence="1">
    <location>
        <position position="152"/>
    </location>
</feature>
<feature type="site" description="Interaction with DNA" evidence="1">
    <location>
        <position position="200"/>
    </location>
</feature>
<feature type="site" description="Interaction with DNA" evidence="1">
    <location>
        <position position="248"/>
    </location>
</feature>
<feature type="site" description="Interaction with DNA" evidence="1">
    <location>
        <position position="279"/>
    </location>
</feature>
<feature type="site" description="Interaction with DNA" evidence="1">
    <location>
        <position position="337"/>
    </location>
</feature>
<feature type="site" description="Interaction with DNA" evidence="1">
    <location>
        <position position="368"/>
    </location>
</feature>
<feature type="site" description="Interaction with DNA" evidence="1">
    <location>
        <position position="410"/>
    </location>
</feature>
<feature type="site" description="Interaction with DNA" evidence="1">
    <location>
        <position position="468"/>
    </location>
</feature>
<feature type="site" description="Interaction with DNA" evidence="1">
    <location>
        <position position="486"/>
    </location>
</feature>
<reference key="1">
    <citation type="submission" date="2007-02" db="EMBL/GenBank/DDBJ databases">
        <title>Chimpanzee mitochondrial topoisomerase I.</title>
        <authorList>
            <person name="Zhang H."/>
            <person name="Pommier Y."/>
        </authorList>
    </citation>
    <scope>NUCLEOTIDE SEQUENCE [MRNA]</scope>
</reference>
<proteinExistence type="evidence at transcript level"/>
<protein>
    <recommendedName>
        <fullName>DNA topoisomerase I, mitochondrial</fullName>
        <shortName>TOP1mt</shortName>
        <ecNumber evidence="3">5.6.2.1</ecNumber>
    </recommendedName>
</protein>
<organism>
    <name type="scientific">Pan troglodytes</name>
    <name type="common">Chimpanzee</name>
    <dbReference type="NCBI Taxonomy" id="9598"/>
    <lineage>
        <taxon>Eukaryota</taxon>
        <taxon>Metazoa</taxon>
        <taxon>Chordata</taxon>
        <taxon>Craniata</taxon>
        <taxon>Vertebrata</taxon>
        <taxon>Euteleostomi</taxon>
        <taxon>Mammalia</taxon>
        <taxon>Eutheria</taxon>
        <taxon>Euarchontoglires</taxon>
        <taxon>Primates</taxon>
        <taxon>Haplorrhini</taxon>
        <taxon>Catarrhini</taxon>
        <taxon>Hominidae</taxon>
        <taxon>Pan</taxon>
    </lineage>
</organism>
<keyword id="KW-0238">DNA-binding</keyword>
<keyword id="KW-0413">Isomerase</keyword>
<keyword id="KW-0496">Mitochondrion</keyword>
<keyword id="KW-1185">Reference proteome</keyword>
<keyword id="KW-0799">Topoisomerase</keyword>
<keyword id="KW-0809">Transit peptide</keyword>
<accession>A9Q1D5</accession>
<gene>
    <name type="primary">TOP1MT</name>
</gene>
<evidence type="ECO:0000250" key="1"/>
<evidence type="ECO:0000255" key="2">
    <source>
        <dbReference type="PROSITE-ProRule" id="PRU01382"/>
    </source>
</evidence>
<evidence type="ECO:0000255" key="3">
    <source>
        <dbReference type="PROSITE-ProRule" id="PRU10130"/>
    </source>
</evidence>
<evidence type="ECO:0000256" key="4">
    <source>
        <dbReference type="SAM" id="MobiDB-lite"/>
    </source>
</evidence>
<evidence type="ECO:0000305" key="5"/>
<name>TOP1M_PANTR</name>
<sequence length="601" mass="69758">MRVVRLLRLRAALTLLGEVPRRPASRGVPGSRRTQKGSGARWEKEKHEDGVKWRQLEHKGPYFAPPYEPLPDGVRFFYEGKPVRLSVAAEEVATFYGRMLGHEYTTKEVFRKNFFNDWRKEMAVEEREVIKSLDKCDFTEIHRYFVDKAAARKVLSREEKQKLKEEAEKLQREFGYCILDGHQEKIGNFKIEPPGLFRGRGDHPKMGMLKRRIMPEDVVINCSRDSKIPEPPAGHQWKEVRSDNTVTWLAAWTESVQNSIKYIMLNPCSKLKGETAWQKFETARRLRGFVDEIRSQYRADWKSREMKTRQRAVALYFIDKLALRAGNEKEDGEAADTVGCCSLRVEHVQLHPEADGCQHVVEFDFLGKDCIRYYNRVPVEKPVYKNLQLFMESKGPRDNLFDRLTTTSLNKHLQELMDGLTAKVFRTYNASITLQEQLRALTRAEDSIAAKILSYNRANRVVAILCNHQRATPSTFEKSMQNLQTKIQAKKEQVAEARAELRRARAEHKAQGDGKSRSVLEKKRRLLEKLQEQLAQLSVQATDKEENKQVALGTSKLNYLDPRISIAWCKRFRVPVEKIYSKTQRERFAWALAMAGEDFEF</sequence>
<comment type="function">
    <text evidence="1">Releases the supercoiling and torsional tension of DNA introduced during duplication of mitochondrial DNA by transiently cleaving and rejoining one strand of the DNA duplex. Introduces a single-strand break via transesterification at a target site in duplex DNA. The scissile phosphodiester is attacked by the catalytic tyrosine of the enzyme, resulting in the formation of a DNA-(3'-phosphotyrosyl)-enzyme intermediate and the expulsion of a 5'-OH DNA strand. The free DNA strand then rotates around the intact phosphodiester bond on the opposing strand, thus removing DNA supercoils. Finally, in the religation step, the DNA 5'-OH attacks the covalent intermediate to expel the active-site tyrosine and restore the DNA phosphodiester backbone (By similarity).</text>
</comment>
<comment type="catalytic activity">
    <reaction evidence="3">
        <text>ATP-independent breakage of single-stranded DNA, followed by passage and rejoining.</text>
        <dbReference type="EC" id="5.6.2.1"/>
    </reaction>
</comment>
<comment type="cofactor">
    <cofactor evidence="1">
        <name>Ca(2+)</name>
        <dbReference type="ChEBI" id="CHEBI:29108"/>
    </cofactor>
    <cofactor evidence="1">
        <name>Mg(2+)</name>
        <dbReference type="ChEBI" id="CHEBI:18420"/>
    </cofactor>
    <text evidence="1">Divalent metal ions (calcium or magnesium).</text>
</comment>
<comment type="subcellular location">
    <subcellularLocation>
        <location evidence="1">Mitochondrion</location>
    </subcellularLocation>
</comment>
<comment type="similarity">
    <text evidence="5">Belongs to the type IB topoisomerase family.</text>
</comment>